<name>FYV8_CANGA</name>
<keyword id="KW-1185">Reference proteome</keyword>
<accession>Q6FSM8</accession>
<sequence>MDESQVERKKSYRWVSASQATYDGAGWDSSSESETETRSQPKLGKLDESLPSLPKLNYDNTDVSQYKEEDDEDTDNRTEKAGEIGAGTLHSNSEIQNDVIVEDDPVIKQTPDMIDKDTLLTSPTAHKESSPSPNGSRHTFSRRPLPNRAVNEHLDDLMLEISKELTPKPEQEAVFGNHSPRKDIDSDLPNGKEDQKLNGSRLGLLNESIDNESDMPSVDETRSKDVDENGEKDREDRFDYYDDDSEFSIDSEIKQAQKASLEELQSEFDSDPQTSNIAKSLEGMNLEHDAEEESVKTNRDSNVSDLQKDQREINESNIENSDNDSLELPLTESSSDELESADHGDALSFTESIQYDQSDGDSEPNQGDDASLVSNRVQQNNVNTDAESADDIAKDKMDDHASGMDFEEDEVLNSTLTDGDVHVHKSGYFKKLVAEELGDKKLDDGKSLNNVASTQTASTEDKVASDTEDVQESKADNDDTKNDAHVSSNRSSVTSEEWRPDTDALRDGFMQKTGDNPPPGFVRDEKGELVDLTPASMKPRVVSTYSEIESTWNAFPSEDADDLETIRDTKTLYDNSTLYNVPGIMTNNDALPPLPEDASLYRDSNQSDAVGSQDRARAASVTRKVSKEGVNIAQPTSQEINKLSEQNTMPTRDLNKIISSNSTHAIKLENLRDYRNTLDNFDSGLQTWIAYTLKSSSKTDRDFIFQEYKSNSHVREAYANADDLSRKNTVINTVTNVNQNVNHLRKKVLQHSLKPKTLFSSISKKKL</sequence>
<evidence type="ECO:0000250" key="1"/>
<evidence type="ECO:0000256" key="2">
    <source>
        <dbReference type="SAM" id="MobiDB-lite"/>
    </source>
</evidence>
<evidence type="ECO:0000305" key="3"/>
<feature type="chain" id="PRO_0000292480" description="Protein FYV8">
    <location>
        <begin position="1"/>
        <end position="767"/>
    </location>
</feature>
<feature type="region of interest" description="Disordered" evidence="2">
    <location>
        <begin position="20"/>
        <end position="408"/>
    </location>
</feature>
<feature type="region of interest" description="Disordered" evidence="2">
    <location>
        <begin position="439"/>
        <end position="501"/>
    </location>
</feature>
<feature type="region of interest" description="Disordered" evidence="2">
    <location>
        <begin position="506"/>
        <end position="525"/>
    </location>
</feature>
<feature type="compositionally biased region" description="Basic and acidic residues" evidence="2">
    <location>
        <begin position="35"/>
        <end position="48"/>
    </location>
</feature>
<feature type="compositionally biased region" description="Polar residues" evidence="2">
    <location>
        <begin position="119"/>
        <end position="138"/>
    </location>
</feature>
<feature type="compositionally biased region" description="Basic and acidic residues" evidence="2">
    <location>
        <begin position="150"/>
        <end position="171"/>
    </location>
</feature>
<feature type="compositionally biased region" description="Basic and acidic residues" evidence="2">
    <location>
        <begin position="180"/>
        <end position="196"/>
    </location>
</feature>
<feature type="compositionally biased region" description="Basic and acidic residues" evidence="2">
    <location>
        <begin position="219"/>
        <end position="240"/>
    </location>
</feature>
<feature type="compositionally biased region" description="Basic and acidic residues" evidence="2">
    <location>
        <begin position="285"/>
        <end position="299"/>
    </location>
</feature>
<feature type="compositionally biased region" description="Polar residues" evidence="2">
    <location>
        <begin position="372"/>
        <end position="386"/>
    </location>
</feature>
<feature type="compositionally biased region" description="Basic and acidic residues" evidence="2">
    <location>
        <begin position="391"/>
        <end position="402"/>
    </location>
</feature>
<feature type="compositionally biased region" description="Polar residues" evidence="2">
    <location>
        <begin position="447"/>
        <end position="458"/>
    </location>
</feature>
<feature type="compositionally biased region" description="Basic and acidic residues" evidence="2">
    <location>
        <begin position="459"/>
        <end position="484"/>
    </location>
</feature>
<feature type="compositionally biased region" description="Polar residues" evidence="2">
    <location>
        <begin position="485"/>
        <end position="495"/>
    </location>
</feature>
<dbReference type="EMBL" id="CR380953">
    <property type="protein sequence ID" value="CAG59693.1"/>
    <property type="molecule type" value="Genomic_DNA"/>
</dbReference>
<dbReference type="RefSeq" id="XP_446766.1">
    <property type="nucleotide sequence ID" value="XM_446766.1"/>
</dbReference>
<dbReference type="FunCoup" id="Q6FSM8">
    <property type="interactions" value="123"/>
</dbReference>
<dbReference type="STRING" id="284593.Q6FSM8"/>
<dbReference type="EnsemblFungi" id="CAGL0G09295g-T">
    <property type="protein sequence ID" value="CAGL0G09295g-T-p1"/>
    <property type="gene ID" value="CAGL0G09295g"/>
</dbReference>
<dbReference type="KEGG" id="cgr:2888051"/>
<dbReference type="CGD" id="CAL0129928">
    <property type="gene designation" value="CAGL0G09295g"/>
</dbReference>
<dbReference type="VEuPathDB" id="FungiDB:CAGL0G09295g"/>
<dbReference type="eggNOG" id="ENOG502QPM9">
    <property type="taxonomic scope" value="Eukaryota"/>
</dbReference>
<dbReference type="HOGENOM" id="CLU_009686_0_0_1"/>
<dbReference type="InParanoid" id="Q6FSM8"/>
<dbReference type="Proteomes" id="UP000002428">
    <property type="component" value="Chromosome G"/>
</dbReference>
<dbReference type="InterPro" id="IPR026248">
    <property type="entry name" value="Fyv8"/>
</dbReference>
<dbReference type="PRINTS" id="PR02076">
    <property type="entry name" value="PROTEINFYV8"/>
</dbReference>
<comment type="function">
    <text evidence="1">Involved in the resistance to unfolded protein response (UPR)-inducing agents.</text>
</comment>
<comment type="similarity">
    <text evidence="3">Belongs to the FYV8 family.</text>
</comment>
<reference key="1">
    <citation type="journal article" date="2004" name="Nature">
        <title>Genome evolution in yeasts.</title>
        <authorList>
            <person name="Dujon B."/>
            <person name="Sherman D."/>
            <person name="Fischer G."/>
            <person name="Durrens P."/>
            <person name="Casaregola S."/>
            <person name="Lafontaine I."/>
            <person name="de Montigny J."/>
            <person name="Marck C."/>
            <person name="Neuveglise C."/>
            <person name="Talla E."/>
            <person name="Goffard N."/>
            <person name="Frangeul L."/>
            <person name="Aigle M."/>
            <person name="Anthouard V."/>
            <person name="Babour A."/>
            <person name="Barbe V."/>
            <person name="Barnay S."/>
            <person name="Blanchin S."/>
            <person name="Beckerich J.-M."/>
            <person name="Beyne E."/>
            <person name="Bleykasten C."/>
            <person name="Boisrame A."/>
            <person name="Boyer J."/>
            <person name="Cattolico L."/>
            <person name="Confanioleri F."/>
            <person name="de Daruvar A."/>
            <person name="Despons L."/>
            <person name="Fabre E."/>
            <person name="Fairhead C."/>
            <person name="Ferry-Dumazet H."/>
            <person name="Groppi A."/>
            <person name="Hantraye F."/>
            <person name="Hennequin C."/>
            <person name="Jauniaux N."/>
            <person name="Joyet P."/>
            <person name="Kachouri R."/>
            <person name="Kerrest A."/>
            <person name="Koszul R."/>
            <person name="Lemaire M."/>
            <person name="Lesur I."/>
            <person name="Ma L."/>
            <person name="Muller H."/>
            <person name="Nicaud J.-M."/>
            <person name="Nikolski M."/>
            <person name="Oztas S."/>
            <person name="Ozier-Kalogeropoulos O."/>
            <person name="Pellenz S."/>
            <person name="Potier S."/>
            <person name="Richard G.-F."/>
            <person name="Straub M.-L."/>
            <person name="Suleau A."/>
            <person name="Swennen D."/>
            <person name="Tekaia F."/>
            <person name="Wesolowski-Louvel M."/>
            <person name="Westhof E."/>
            <person name="Wirth B."/>
            <person name="Zeniou-Meyer M."/>
            <person name="Zivanovic Y."/>
            <person name="Bolotin-Fukuhara M."/>
            <person name="Thierry A."/>
            <person name="Bouchier C."/>
            <person name="Caudron B."/>
            <person name="Scarpelli C."/>
            <person name="Gaillardin C."/>
            <person name="Weissenbach J."/>
            <person name="Wincker P."/>
            <person name="Souciet J.-L."/>
        </authorList>
    </citation>
    <scope>NUCLEOTIDE SEQUENCE [LARGE SCALE GENOMIC DNA]</scope>
    <source>
        <strain>ATCC 2001 / BCRC 20586 / JCM 3761 / NBRC 0622 / NRRL Y-65 / CBS 138</strain>
    </source>
</reference>
<gene>
    <name type="primary">FYV8</name>
    <name type="ordered locus">CAGL0G09295g</name>
</gene>
<organism>
    <name type="scientific">Candida glabrata (strain ATCC 2001 / BCRC 20586 / JCM 3761 / NBRC 0622 / NRRL Y-65 / CBS 138)</name>
    <name type="common">Yeast</name>
    <name type="synonym">Nakaseomyces glabratus</name>
    <dbReference type="NCBI Taxonomy" id="284593"/>
    <lineage>
        <taxon>Eukaryota</taxon>
        <taxon>Fungi</taxon>
        <taxon>Dikarya</taxon>
        <taxon>Ascomycota</taxon>
        <taxon>Saccharomycotina</taxon>
        <taxon>Saccharomycetes</taxon>
        <taxon>Saccharomycetales</taxon>
        <taxon>Saccharomycetaceae</taxon>
        <taxon>Nakaseomyces</taxon>
    </lineage>
</organism>
<proteinExistence type="inferred from homology"/>
<protein>
    <recommendedName>
        <fullName>Protein FYV8</fullName>
    </recommendedName>
</protein>